<gene>
    <name evidence="1" type="primary">rnhA</name>
    <name type="ordered locus">PST_2252</name>
</gene>
<evidence type="ECO:0000255" key="1">
    <source>
        <dbReference type="HAMAP-Rule" id="MF_00042"/>
    </source>
</evidence>
<evidence type="ECO:0000255" key="2">
    <source>
        <dbReference type="PROSITE-ProRule" id="PRU00408"/>
    </source>
</evidence>
<feature type="chain" id="PRO_0000332656" description="Ribonuclease H">
    <location>
        <begin position="1"/>
        <end position="151"/>
    </location>
</feature>
<feature type="domain" description="RNase H type-1" evidence="2">
    <location>
        <begin position="2"/>
        <end position="143"/>
    </location>
</feature>
<feature type="binding site" evidence="1">
    <location>
        <position position="11"/>
    </location>
    <ligand>
        <name>Mg(2+)</name>
        <dbReference type="ChEBI" id="CHEBI:18420"/>
        <label>1</label>
    </ligand>
</feature>
<feature type="binding site" evidence="1">
    <location>
        <position position="11"/>
    </location>
    <ligand>
        <name>Mg(2+)</name>
        <dbReference type="ChEBI" id="CHEBI:18420"/>
        <label>2</label>
    </ligand>
</feature>
<feature type="binding site" evidence="1">
    <location>
        <position position="49"/>
    </location>
    <ligand>
        <name>Mg(2+)</name>
        <dbReference type="ChEBI" id="CHEBI:18420"/>
        <label>1</label>
    </ligand>
</feature>
<feature type="binding site" evidence="1">
    <location>
        <position position="71"/>
    </location>
    <ligand>
        <name>Mg(2+)</name>
        <dbReference type="ChEBI" id="CHEBI:18420"/>
        <label>1</label>
    </ligand>
</feature>
<feature type="binding site" evidence="1">
    <location>
        <position position="135"/>
    </location>
    <ligand>
        <name>Mg(2+)</name>
        <dbReference type="ChEBI" id="CHEBI:18420"/>
        <label>2</label>
    </ligand>
</feature>
<accession>A4VLR0</accession>
<name>RNH_STUS1</name>
<protein>
    <recommendedName>
        <fullName evidence="1">Ribonuclease H</fullName>
        <shortName evidence="1">RNase H</shortName>
        <ecNumber evidence="1">3.1.26.4</ecNumber>
    </recommendedName>
</protein>
<comment type="function">
    <text evidence="1">Endonuclease that specifically degrades the RNA of RNA-DNA hybrids.</text>
</comment>
<comment type="catalytic activity">
    <reaction evidence="1">
        <text>Endonucleolytic cleavage to 5'-phosphomonoester.</text>
        <dbReference type="EC" id="3.1.26.4"/>
    </reaction>
</comment>
<comment type="cofactor">
    <cofactor evidence="1">
        <name>Mg(2+)</name>
        <dbReference type="ChEBI" id="CHEBI:18420"/>
    </cofactor>
    <text evidence="1">Binds 1 Mg(2+) ion per subunit. May bind a second metal ion at a regulatory site, or after substrate binding.</text>
</comment>
<comment type="subunit">
    <text evidence="1">Monomer.</text>
</comment>
<comment type="subcellular location">
    <subcellularLocation>
        <location evidence="1">Cytoplasm</location>
    </subcellularLocation>
</comment>
<comment type="similarity">
    <text evidence="1">Belongs to the RNase H family.</text>
</comment>
<organism>
    <name type="scientific">Stutzerimonas stutzeri (strain A1501)</name>
    <name type="common">Pseudomonas stutzeri</name>
    <dbReference type="NCBI Taxonomy" id="379731"/>
    <lineage>
        <taxon>Bacteria</taxon>
        <taxon>Pseudomonadati</taxon>
        <taxon>Pseudomonadota</taxon>
        <taxon>Gammaproteobacteria</taxon>
        <taxon>Pseudomonadales</taxon>
        <taxon>Pseudomonadaceae</taxon>
        <taxon>Stutzerimonas</taxon>
    </lineage>
</organism>
<keyword id="KW-0963">Cytoplasm</keyword>
<keyword id="KW-0255">Endonuclease</keyword>
<keyword id="KW-0378">Hydrolase</keyword>
<keyword id="KW-0460">Magnesium</keyword>
<keyword id="KW-0479">Metal-binding</keyword>
<keyword id="KW-0540">Nuclease</keyword>
<keyword id="KW-1185">Reference proteome</keyword>
<sequence length="151" mass="17176">MSDDWVEIYTDGACKGNPGPGGWGALLIYKGVKRELWGGEPDTTNNRMELMAAIRALAELKRPCKVRLVTDSQYVMQGINDWMPNWKKRGWKTASKQPVKNADLWQQLDEQVNRHEVSWQWVRGHTGHPGNEQADLLANRGVVQAKRQPIV</sequence>
<proteinExistence type="inferred from homology"/>
<dbReference type="EC" id="3.1.26.4" evidence="1"/>
<dbReference type="EMBL" id="CP000304">
    <property type="protein sequence ID" value="ABP79911.1"/>
    <property type="molecule type" value="Genomic_DNA"/>
</dbReference>
<dbReference type="RefSeq" id="WP_011913378.1">
    <property type="nucleotide sequence ID" value="NC_009434.1"/>
</dbReference>
<dbReference type="SMR" id="A4VLR0"/>
<dbReference type="GeneID" id="66821269"/>
<dbReference type="KEGG" id="psa:PST_2252"/>
<dbReference type="eggNOG" id="COG0328">
    <property type="taxonomic scope" value="Bacteria"/>
</dbReference>
<dbReference type="HOGENOM" id="CLU_030894_6_0_6"/>
<dbReference type="Proteomes" id="UP000000233">
    <property type="component" value="Chromosome"/>
</dbReference>
<dbReference type="GO" id="GO:0005737">
    <property type="term" value="C:cytoplasm"/>
    <property type="evidence" value="ECO:0007669"/>
    <property type="project" value="UniProtKB-SubCell"/>
</dbReference>
<dbReference type="GO" id="GO:0000287">
    <property type="term" value="F:magnesium ion binding"/>
    <property type="evidence" value="ECO:0007669"/>
    <property type="project" value="UniProtKB-UniRule"/>
</dbReference>
<dbReference type="GO" id="GO:0003676">
    <property type="term" value="F:nucleic acid binding"/>
    <property type="evidence" value="ECO:0007669"/>
    <property type="project" value="InterPro"/>
</dbReference>
<dbReference type="GO" id="GO:0004523">
    <property type="term" value="F:RNA-DNA hybrid ribonuclease activity"/>
    <property type="evidence" value="ECO:0007669"/>
    <property type="project" value="UniProtKB-UniRule"/>
</dbReference>
<dbReference type="GO" id="GO:0043137">
    <property type="term" value="P:DNA replication, removal of RNA primer"/>
    <property type="evidence" value="ECO:0007669"/>
    <property type="project" value="TreeGrafter"/>
</dbReference>
<dbReference type="CDD" id="cd09278">
    <property type="entry name" value="RNase_HI_prokaryote_like"/>
    <property type="match status" value="1"/>
</dbReference>
<dbReference type="FunFam" id="3.30.420.10:FF:000119">
    <property type="entry name" value="Ribonuclease H"/>
    <property type="match status" value="1"/>
</dbReference>
<dbReference type="Gene3D" id="3.30.420.10">
    <property type="entry name" value="Ribonuclease H-like superfamily/Ribonuclease H"/>
    <property type="match status" value="1"/>
</dbReference>
<dbReference type="HAMAP" id="MF_00042">
    <property type="entry name" value="RNase_H"/>
    <property type="match status" value="1"/>
</dbReference>
<dbReference type="InterPro" id="IPR050092">
    <property type="entry name" value="RNase_H"/>
</dbReference>
<dbReference type="InterPro" id="IPR012337">
    <property type="entry name" value="RNaseH-like_sf"/>
</dbReference>
<dbReference type="InterPro" id="IPR002156">
    <property type="entry name" value="RNaseH_domain"/>
</dbReference>
<dbReference type="InterPro" id="IPR036397">
    <property type="entry name" value="RNaseH_sf"/>
</dbReference>
<dbReference type="InterPro" id="IPR022892">
    <property type="entry name" value="RNaseHI"/>
</dbReference>
<dbReference type="NCBIfam" id="NF001236">
    <property type="entry name" value="PRK00203.1"/>
    <property type="match status" value="1"/>
</dbReference>
<dbReference type="PANTHER" id="PTHR10642">
    <property type="entry name" value="RIBONUCLEASE H1"/>
    <property type="match status" value="1"/>
</dbReference>
<dbReference type="PANTHER" id="PTHR10642:SF26">
    <property type="entry name" value="RIBONUCLEASE H1"/>
    <property type="match status" value="1"/>
</dbReference>
<dbReference type="Pfam" id="PF00075">
    <property type="entry name" value="RNase_H"/>
    <property type="match status" value="1"/>
</dbReference>
<dbReference type="SUPFAM" id="SSF53098">
    <property type="entry name" value="Ribonuclease H-like"/>
    <property type="match status" value="1"/>
</dbReference>
<dbReference type="PROSITE" id="PS50879">
    <property type="entry name" value="RNASE_H_1"/>
    <property type="match status" value="1"/>
</dbReference>
<reference key="1">
    <citation type="journal article" date="2008" name="Proc. Natl. Acad. Sci. U.S.A.">
        <title>Nitrogen fixation island and rhizosphere competence traits in the genome of root-associated Pseudomonas stutzeri A1501.</title>
        <authorList>
            <person name="Yan Y."/>
            <person name="Yang J."/>
            <person name="Dou Y."/>
            <person name="Chen M."/>
            <person name="Ping S."/>
            <person name="Peng J."/>
            <person name="Lu W."/>
            <person name="Zhang W."/>
            <person name="Yao Z."/>
            <person name="Li H."/>
            <person name="Liu W."/>
            <person name="He S."/>
            <person name="Geng L."/>
            <person name="Zhang X."/>
            <person name="Yang F."/>
            <person name="Yu H."/>
            <person name="Zhan Y."/>
            <person name="Li D."/>
            <person name="Lin Z."/>
            <person name="Wang Y."/>
            <person name="Elmerich C."/>
            <person name="Lin M."/>
            <person name="Jin Q."/>
        </authorList>
    </citation>
    <scope>NUCLEOTIDE SEQUENCE [LARGE SCALE GENOMIC DNA]</scope>
    <source>
        <strain>A1501</strain>
    </source>
</reference>